<comment type="function">
    <text evidence="1">Orphan receptor. Probably involved in the function of nociceptive neurons. May regulate nociceptor function and/or development, including the sensation or modulation of pain. Potently activated by enkephalins (By similarity).</text>
</comment>
<comment type="interaction">
    <interactant intactId="EBI-17958655">
        <id>Q96LB0</id>
    </interactant>
    <interactant intactId="EBI-10243654">
        <id>Q5BVD1</id>
        <label>TTMP</label>
    </interactant>
    <organismsDiffer>false</organismsDiffer>
    <experiments>3</experiments>
</comment>
<comment type="subcellular location">
    <subcellularLocation>
        <location>Cell membrane</location>
        <topology>Multi-pass membrane protein</topology>
    </subcellularLocation>
</comment>
<comment type="tissue specificity">
    <text evidence="5">Uniquely localized in a subset of small dorsal root and trigeminal sensory neurons.</text>
</comment>
<comment type="similarity">
    <text evidence="3">Belongs to the G-protein coupled receptor 1 family. Mas subfamily.</text>
</comment>
<reference key="1">
    <citation type="journal article" date="2001" name="Cell">
        <title>A diverse family of GPCRs expressed in specific subsets of nociceptive sensory neurons.</title>
        <authorList>
            <person name="Dong X."/>
            <person name="Han S.-K."/>
            <person name="Zylka M.J."/>
            <person name="Simon M.I."/>
            <person name="Anderson D.J."/>
        </authorList>
    </citation>
    <scope>NUCLEOTIDE SEQUENCE [GENOMIC DNA]</scope>
    <scope>VARIANT ASP-169</scope>
</reference>
<reference key="2">
    <citation type="journal article" date="2002" name="Nat. Neurosci.">
        <title>Proenkephalin A gene products activate a new family of sensory neuron-specific GPCRs.</title>
        <authorList>
            <person name="Lembo P.M.C."/>
            <person name="Grazzini E."/>
            <person name="Groblewski T."/>
            <person name="O'Donnell D."/>
            <person name="Roy M.-O."/>
            <person name="Zhang J."/>
            <person name="Hoffert C."/>
            <person name="Cao J."/>
            <person name="Schmidt R."/>
            <person name="Pelletier M."/>
            <person name="Labarre M."/>
            <person name="Gosselin M."/>
            <person name="Fortin Y."/>
            <person name="Banville D."/>
            <person name="Shen S."/>
            <person name="Stroem P."/>
            <person name="Payza K."/>
            <person name="Dray A."/>
            <person name="Walker P."/>
            <person name="Ahmad S."/>
        </authorList>
    </citation>
    <scope>NUCLEOTIDE SEQUENCE [GENOMIC DNA]</scope>
    <scope>TISSUE SPECIFICITY</scope>
    <scope>VARIANT ASP-169</scope>
</reference>
<reference key="3">
    <citation type="submission" date="2007-12" db="EMBL/GenBank/DDBJ databases">
        <authorList>
            <person name="Martin A.L."/>
            <person name="Kaighin V.A."/>
            <person name="Aronstam R.S."/>
        </authorList>
    </citation>
    <scope>NUCLEOTIDE SEQUENCE [MRNA]</scope>
    <scope>VARIANT ASP-169</scope>
    <source>
        <tissue>Brain</tissue>
    </source>
</reference>
<reference key="4">
    <citation type="journal article" date="2006" name="Nature">
        <title>Human chromosome 11 DNA sequence and analysis including novel gene identification.</title>
        <authorList>
            <person name="Taylor T.D."/>
            <person name="Noguchi H."/>
            <person name="Totoki Y."/>
            <person name="Toyoda A."/>
            <person name="Kuroki Y."/>
            <person name="Dewar K."/>
            <person name="Lloyd C."/>
            <person name="Itoh T."/>
            <person name="Takeda T."/>
            <person name="Kim D.-W."/>
            <person name="She X."/>
            <person name="Barlow K.F."/>
            <person name="Bloom T."/>
            <person name="Bruford E."/>
            <person name="Chang J.L."/>
            <person name="Cuomo C.A."/>
            <person name="Eichler E."/>
            <person name="FitzGerald M.G."/>
            <person name="Jaffe D.B."/>
            <person name="LaButti K."/>
            <person name="Nicol R."/>
            <person name="Park H.-S."/>
            <person name="Seaman C."/>
            <person name="Sougnez C."/>
            <person name="Yang X."/>
            <person name="Zimmer A.R."/>
            <person name="Zody M.C."/>
            <person name="Birren B.W."/>
            <person name="Nusbaum C."/>
            <person name="Fujiyama A."/>
            <person name="Hattori M."/>
            <person name="Rogers J."/>
            <person name="Lander E.S."/>
            <person name="Sakaki Y."/>
        </authorList>
    </citation>
    <scope>NUCLEOTIDE SEQUENCE [LARGE SCALE GENOMIC DNA]</scope>
</reference>
<reference key="5">
    <citation type="submission" date="2005-09" db="EMBL/GenBank/DDBJ databases">
        <authorList>
            <person name="Mural R.J."/>
            <person name="Istrail S."/>
            <person name="Sutton G.G."/>
            <person name="Florea L."/>
            <person name="Halpern A.L."/>
            <person name="Mobarry C.M."/>
            <person name="Lippert R."/>
            <person name="Walenz B."/>
            <person name="Shatkay H."/>
            <person name="Dew I."/>
            <person name="Miller J.R."/>
            <person name="Flanigan M.J."/>
            <person name="Edwards N.J."/>
            <person name="Bolanos R."/>
            <person name="Fasulo D."/>
            <person name="Halldorsson B.V."/>
            <person name="Hannenhalli S."/>
            <person name="Turner R."/>
            <person name="Yooseph S."/>
            <person name="Lu F."/>
            <person name="Nusskern D.R."/>
            <person name="Shue B.C."/>
            <person name="Zheng X.H."/>
            <person name="Zhong F."/>
            <person name="Delcher A.L."/>
            <person name="Huson D.H."/>
            <person name="Kravitz S.A."/>
            <person name="Mouchard L."/>
            <person name="Reinert K."/>
            <person name="Remington K.A."/>
            <person name="Clark A.G."/>
            <person name="Waterman M.S."/>
            <person name="Eichler E.E."/>
            <person name="Adams M.D."/>
            <person name="Hunkapiller M.W."/>
            <person name="Myers E.W."/>
            <person name="Venter J.C."/>
        </authorList>
    </citation>
    <scope>NUCLEOTIDE SEQUENCE [LARGE SCALE GENOMIC DNA]</scope>
    <scope>VARIANT ASP-169</scope>
</reference>
<reference key="6">
    <citation type="journal article" date="2004" name="Genome Res.">
        <title>The status, quality, and expansion of the NIH full-length cDNA project: the Mammalian Gene Collection (MGC).</title>
        <authorList>
            <consortium name="The MGC Project Team"/>
        </authorList>
    </citation>
    <scope>NUCLEOTIDE SEQUENCE [LARGE SCALE MRNA]</scope>
    <scope>VARIANTS ARG-82 AND ASP-169</scope>
    <source>
        <tissue>Testis</tissue>
    </source>
</reference>
<proteinExistence type="evidence at protein level"/>
<name>MRGX3_HUMAN</name>
<feature type="chain" id="PRO_0000069782" description="Mas-related G-protein coupled receptor member X3">
    <location>
        <begin position="1"/>
        <end position="322"/>
    </location>
</feature>
<feature type="topological domain" description="Extracellular" evidence="2">
    <location>
        <begin position="1"/>
        <end position="31"/>
    </location>
</feature>
<feature type="transmembrane region" description="Helical; Name=1" evidence="2">
    <location>
        <begin position="32"/>
        <end position="52"/>
    </location>
</feature>
<feature type="topological domain" description="Cytoplasmic" evidence="2">
    <location>
        <begin position="53"/>
        <end position="60"/>
    </location>
</feature>
<feature type="transmembrane region" description="Helical; Name=2" evidence="2">
    <location>
        <begin position="61"/>
        <end position="81"/>
    </location>
</feature>
<feature type="topological domain" description="Extracellular" evidence="2">
    <location>
        <begin position="82"/>
        <end position="96"/>
    </location>
</feature>
<feature type="transmembrane region" description="Helical; Name=3" evidence="2">
    <location>
        <begin position="97"/>
        <end position="117"/>
    </location>
</feature>
<feature type="topological domain" description="Cytoplasmic" evidence="2">
    <location>
        <begin position="118"/>
        <end position="140"/>
    </location>
</feature>
<feature type="transmembrane region" description="Helical; Name=4" evidence="2">
    <location>
        <begin position="141"/>
        <end position="161"/>
    </location>
</feature>
<feature type="topological domain" description="Extracellular" evidence="2">
    <location>
        <begin position="162"/>
        <end position="177"/>
    </location>
</feature>
<feature type="transmembrane region" description="Helical; Name=5" evidence="2">
    <location>
        <begin position="178"/>
        <end position="198"/>
    </location>
</feature>
<feature type="topological domain" description="Cytoplasmic" evidence="2">
    <location>
        <begin position="199"/>
        <end position="213"/>
    </location>
</feature>
<feature type="transmembrane region" description="Helical; Name=6" evidence="2">
    <location>
        <begin position="214"/>
        <end position="234"/>
    </location>
</feature>
<feature type="topological domain" description="Extracellular" evidence="2">
    <location>
        <begin position="235"/>
        <end position="254"/>
    </location>
</feature>
<feature type="transmembrane region" description="Helical; Name=7" evidence="2">
    <location>
        <begin position="255"/>
        <end position="275"/>
    </location>
</feature>
<feature type="topological domain" description="Cytoplasmic" evidence="2">
    <location>
        <begin position="276"/>
        <end position="322"/>
    </location>
</feature>
<feature type="sequence variant" id="VAR_025507" description="In dbSNP:rs12291017." evidence="6">
    <original>C</original>
    <variation>R</variation>
    <location>
        <position position="82"/>
    </location>
</feature>
<feature type="sequence variant" id="VAR_019434" description="In dbSNP:rs4274188." evidence="4 5 6 7 8">
    <original>N</original>
    <variation>D</variation>
    <location>
        <position position="169"/>
    </location>
</feature>
<feature type="sequence conflict" description="In Ref. 2; AAL86878/AAL86879." evidence="9" ref="2">
    <original>S</original>
    <variation>P</variation>
    <location>
        <position position="3"/>
    </location>
</feature>
<feature type="sequence conflict" description="In Ref. 2; AAL86879." evidence="9" ref="2">
    <original>I</original>
    <variation>V</variation>
    <location>
        <position position="5"/>
    </location>
</feature>
<feature type="sequence conflict" description="In Ref. 2; AAL86879." evidence="9" ref="2">
    <original>R</original>
    <variation>S</variation>
    <location>
        <position position="91"/>
    </location>
</feature>
<feature type="sequence conflict" description="In Ref. 2; AAL86879." evidence="9" ref="2">
    <original>S</original>
    <variation>N</variation>
    <location>
        <position position="114"/>
    </location>
</feature>
<feature type="sequence conflict" description="In Ref. 2; AAL86879." evidence="9" ref="2">
    <original>L</original>
    <variation>P</variation>
    <location>
        <position position="149"/>
    </location>
</feature>
<feature type="sequence conflict" description="In Ref. 2; AAL86879." evidence="9" ref="2">
    <original>W</original>
    <variation>R</variation>
    <location>
        <position position="172"/>
    </location>
</feature>
<feature type="sequence conflict" description="In Ref. 2; AAL86879." evidence="9" ref="2">
    <original>C</original>
    <variation>R</variation>
    <location>
        <position position="188"/>
    </location>
</feature>
<feature type="sequence conflict" description="In Ref. 2; AAL86879." evidence="9" ref="2">
    <original>V</original>
    <variation>M</variation>
    <location>
        <position position="275"/>
    </location>
</feature>
<feature type="sequence conflict" description="In Ref. 2; AAL86879." evidence="9" ref="2">
    <original>R</original>
    <variation>L</variation>
    <location>
        <position position="281"/>
    </location>
</feature>
<feature type="sequence conflict" description="In Ref. 2; AAL86879." evidence="9" ref="2">
    <original>QN</original>
    <variation>KT</variation>
    <location>
        <begin position="285"/>
        <end position="286"/>
    </location>
</feature>
<feature type="sequence conflict" description="In Ref. 2; AAL86879." evidence="9" ref="2">
    <original>A</original>
    <variation>D</variation>
    <location>
        <position position="294"/>
    </location>
</feature>
<feature type="sequence conflict" description="In Ref. 2; AAL86879." evidence="9" ref="2">
    <original>G</original>
    <variation>W</variation>
    <location>
        <position position="306"/>
    </location>
</feature>
<feature type="sequence conflict" description="In Ref. 5; AAH67292." evidence="9" ref="5">
    <original>W</original>
    <variation>Q</variation>
    <location>
        <position position="307"/>
    </location>
</feature>
<feature type="sequence conflict" description="In Ref. 2; AAL86878." evidence="9" ref="2">
    <original>R</original>
    <variation>K</variation>
    <location>
        <position position="319"/>
    </location>
</feature>
<dbReference type="EMBL" id="AY042215">
    <property type="protein sequence ID" value="AAK91806.1"/>
    <property type="molecule type" value="Genomic_DNA"/>
</dbReference>
<dbReference type="EMBL" id="AF474987">
    <property type="protein sequence ID" value="AAL86878.2"/>
    <property type="molecule type" value="Genomic_DNA"/>
</dbReference>
<dbReference type="EMBL" id="AF474988">
    <property type="protein sequence ID" value="AAL86879.2"/>
    <property type="molecule type" value="Genomic_DNA"/>
</dbReference>
<dbReference type="EMBL" id="EU432126">
    <property type="protein sequence ID" value="ABY87925.1"/>
    <property type="molecule type" value="mRNA"/>
</dbReference>
<dbReference type="EMBL" id="AC090099">
    <property type="status" value="NOT_ANNOTATED_CDS"/>
    <property type="molecule type" value="Genomic_DNA"/>
</dbReference>
<dbReference type="EMBL" id="CH471064">
    <property type="protein sequence ID" value="EAW68417.1"/>
    <property type="molecule type" value="Genomic_DNA"/>
</dbReference>
<dbReference type="EMBL" id="BC067292">
    <property type="protein sequence ID" value="AAH67292.1"/>
    <property type="molecule type" value="mRNA"/>
</dbReference>
<dbReference type="CCDS" id="CCDS7830.1"/>
<dbReference type="RefSeq" id="NP_001357393.1">
    <property type="nucleotide sequence ID" value="NM_001370464.1"/>
</dbReference>
<dbReference type="RefSeq" id="NP_473372.3">
    <property type="nucleotide sequence ID" value="NM_054031.3"/>
</dbReference>
<dbReference type="RefSeq" id="XP_011518184.1">
    <property type="nucleotide sequence ID" value="XM_011519882.2"/>
</dbReference>
<dbReference type="SMR" id="Q96LB0"/>
<dbReference type="BioGRID" id="125576">
    <property type="interactions" value="2"/>
</dbReference>
<dbReference type="FunCoup" id="Q96LB0">
    <property type="interactions" value="56"/>
</dbReference>
<dbReference type="IntAct" id="Q96LB0">
    <property type="interactions" value="2"/>
</dbReference>
<dbReference type="STRING" id="9606.ENSP00000379571"/>
<dbReference type="ChEMBL" id="CHEMBL4523905"/>
<dbReference type="BioMuta" id="MRGPRX3"/>
<dbReference type="DMDM" id="311033400"/>
<dbReference type="MassIVE" id="Q96LB0"/>
<dbReference type="PaxDb" id="9606-ENSP00000379571"/>
<dbReference type="Antibodypedia" id="24979">
    <property type="antibodies" value="168 antibodies from 25 providers"/>
</dbReference>
<dbReference type="DNASU" id="117195"/>
<dbReference type="Ensembl" id="ENST00000396275.2">
    <property type="protein sequence ID" value="ENSP00000379571.2"/>
    <property type="gene ID" value="ENSG00000179826.8"/>
</dbReference>
<dbReference type="Ensembl" id="ENST00000621697.2">
    <property type="protein sequence ID" value="ENSP00000481943.1"/>
    <property type="gene ID" value="ENSG00000179826.8"/>
</dbReference>
<dbReference type="GeneID" id="117195"/>
<dbReference type="KEGG" id="hsa:117195"/>
<dbReference type="MANE-Select" id="ENST00000621697.2">
    <property type="protein sequence ID" value="ENSP00000481943.1"/>
    <property type="RefSeq nucleotide sequence ID" value="NM_001370464.1"/>
    <property type="RefSeq protein sequence ID" value="NP_001357393.1"/>
</dbReference>
<dbReference type="UCSC" id="uc001mnu.3">
    <property type="organism name" value="human"/>
</dbReference>
<dbReference type="AGR" id="HGNC:17980"/>
<dbReference type="CTD" id="117195"/>
<dbReference type="DisGeNET" id="117195"/>
<dbReference type="GeneCards" id="MRGPRX3"/>
<dbReference type="HGNC" id="HGNC:17980">
    <property type="gene designation" value="MRGPRX3"/>
</dbReference>
<dbReference type="HPA" id="ENSG00000179826">
    <property type="expression patterns" value="Tissue enhanced (salivary)"/>
</dbReference>
<dbReference type="MIM" id="607229">
    <property type="type" value="gene"/>
</dbReference>
<dbReference type="neXtProt" id="NX_Q96LB0"/>
<dbReference type="OpenTargets" id="ENSG00000179826"/>
<dbReference type="PharmGKB" id="PA142671336"/>
<dbReference type="VEuPathDB" id="HostDB:ENSG00000179826"/>
<dbReference type="eggNOG" id="ENOG502RTWA">
    <property type="taxonomic scope" value="Eukaryota"/>
</dbReference>
<dbReference type="GeneTree" id="ENSGT01030000234639"/>
<dbReference type="HOGENOM" id="CLU_009579_4_1_1"/>
<dbReference type="InParanoid" id="Q96LB0"/>
<dbReference type="OMA" id="DSVWCET"/>
<dbReference type="OrthoDB" id="9535517at2759"/>
<dbReference type="PAN-GO" id="Q96LB0">
    <property type="GO annotations" value="2 GO annotations based on evolutionary models"/>
</dbReference>
<dbReference type="PhylomeDB" id="Q96LB0"/>
<dbReference type="TreeFam" id="TF336336"/>
<dbReference type="PathwayCommons" id="Q96LB0"/>
<dbReference type="SignaLink" id="Q96LB0"/>
<dbReference type="BioGRID-ORCS" id="117195">
    <property type="hits" value="36 hits in 1094 CRISPR screens"/>
</dbReference>
<dbReference type="GeneWiki" id="MRGPRX3"/>
<dbReference type="GenomeRNAi" id="117195"/>
<dbReference type="Pharos" id="Q96LB0">
    <property type="development level" value="Tdark"/>
</dbReference>
<dbReference type="PRO" id="PR:Q96LB0"/>
<dbReference type="Proteomes" id="UP000005640">
    <property type="component" value="Chromosome 11"/>
</dbReference>
<dbReference type="RNAct" id="Q96LB0">
    <property type="molecule type" value="protein"/>
</dbReference>
<dbReference type="Bgee" id="ENSG00000179826">
    <property type="expression patterns" value="Expressed in minor salivary gland and 11 other cell types or tissues"/>
</dbReference>
<dbReference type="GO" id="GO:0005886">
    <property type="term" value="C:plasma membrane"/>
    <property type="evidence" value="ECO:0000318"/>
    <property type="project" value="GO_Central"/>
</dbReference>
<dbReference type="GO" id="GO:0004930">
    <property type="term" value="F:G protein-coupled receptor activity"/>
    <property type="evidence" value="ECO:0000318"/>
    <property type="project" value="GO_Central"/>
</dbReference>
<dbReference type="GO" id="GO:0007186">
    <property type="term" value="P:G protein-coupled receptor signaling pathway"/>
    <property type="evidence" value="ECO:0000318"/>
    <property type="project" value="GO_Central"/>
</dbReference>
<dbReference type="CDD" id="cd15106">
    <property type="entry name" value="7tmA_MrgprX-like"/>
    <property type="match status" value="1"/>
</dbReference>
<dbReference type="FunFam" id="1.20.1070.10:FF:000140">
    <property type="entry name" value="Mas-related G-protein coupled receptor member X2"/>
    <property type="match status" value="1"/>
</dbReference>
<dbReference type="Gene3D" id="1.20.1070.10">
    <property type="entry name" value="Rhodopsin 7-helix transmembrane proteins"/>
    <property type="match status" value="1"/>
</dbReference>
<dbReference type="InterPro" id="IPR000276">
    <property type="entry name" value="GPCR_Rhodpsn"/>
</dbReference>
<dbReference type="InterPro" id="IPR017452">
    <property type="entry name" value="GPCR_Rhodpsn_7TM"/>
</dbReference>
<dbReference type="InterPro" id="IPR026234">
    <property type="entry name" value="MRGPCRFAMILY"/>
</dbReference>
<dbReference type="PANTHER" id="PTHR11334">
    <property type="entry name" value="MAS-RELATED G-PROTEIN COUPLED RECEPTOR"/>
    <property type="match status" value="1"/>
</dbReference>
<dbReference type="PANTHER" id="PTHR11334:SF34">
    <property type="entry name" value="MAS-RELATED G-PROTEIN COUPLED RECEPTOR MEMBER X3"/>
    <property type="match status" value="1"/>
</dbReference>
<dbReference type="Pfam" id="PF00001">
    <property type="entry name" value="7tm_1"/>
    <property type="match status" value="1"/>
</dbReference>
<dbReference type="PRINTS" id="PR00237">
    <property type="entry name" value="GPCRRHODOPSN"/>
</dbReference>
<dbReference type="PRINTS" id="PR02108">
    <property type="entry name" value="MRGPCRFAMILY"/>
</dbReference>
<dbReference type="SUPFAM" id="SSF81321">
    <property type="entry name" value="Family A G protein-coupled receptor-like"/>
    <property type="match status" value="1"/>
</dbReference>
<dbReference type="PROSITE" id="PS00237">
    <property type="entry name" value="G_PROTEIN_RECEP_F1_1"/>
    <property type="match status" value="1"/>
</dbReference>
<dbReference type="PROSITE" id="PS50262">
    <property type="entry name" value="G_PROTEIN_RECEP_F1_2"/>
    <property type="match status" value="1"/>
</dbReference>
<protein>
    <recommendedName>
        <fullName>Mas-related G-protein coupled receptor member X3</fullName>
    </recommendedName>
    <alternativeName>
        <fullName>Sensory neuron-specific G-protein coupled receptor 1/2</fullName>
    </alternativeName>
</protein>
<keyword id="KW-1003">Cell membrane</keyword>
<keyword id="KW-0297">G-protein coupled receptor</keyword>
<keyword id="KW-0472">Membrane</keyword>
<keyword id="KW-0675">Receptor</keyword>
<keyword id="KW-1185">Reference proteome</keyword>
<keyword id="KW-0807">Transducer</keyword>
<keyword id="KW-0812">Transmembrane</keyword>
<keyword id="KW-1133">Transmembrane helix</keyword>
<accession>Q96LB0</accession>
<accession>B0M0L1</accession>
<accession>Q8TDE0</accession>
<accession>Q8TDE1</accession>
<gene>
    <name type="primary">MRGPRX3</name>
    <name type="synonym">MRGX3</name>
    <name type="synonym">SNSR1</name>
    <name type="synonym">SNSR2</name>
</gene>
<organism>
    <name type="scientific">Homo sapiens</name>
    <name type="common">Human</name>
    <dbReference type="NCBI Taxonomy" id="9606"/>
    <lineage>
        <taxon>Eukaryota</taxon>
        <taxon>Metazoa</taxon>
        <taxon>Chordata</taxon>
        <taxon>Craniata</taxon>
        <taxon>Vertebrata</taxon>
        <taxon>Euteleostomi</taxon>
        <taxon>Mammalia</taxon>
        <taxon>Eutheria</taxon>
        <taxon>Euarchontoglires</taxon>
        <taxon>Primates</taxon>
        <taxon>Haplorrhini</taxon>
        <taxon>Catarrhini</taxon>
        <taxon>Hominidae</taxon>
        <taxon>Homo</taxon>
    </lineage>
</organism>
<sequence length="322" mass="36483">MDSTIPVLGTELTPINGREETPCYKQTLSFTGLTCIVSLVALTGNAVVLWLLGCRMRRNAVSIYILNLVAADFLFLSGHIICSPLRLINIRHPISKILSPVMTFPYFIGLSMLSAISTERCLSILWPIWYHCRRPRYLSSVMCVLLWALSLLRSILEWMFCDFLFSGANSVWCETSDFITIAWLVFLCVVLCGSSLVLLVRILCGSRKMPLTRLYVTILLTVLVFLLCGLPFGIQWALFSRIHLDWKVLFCHVHLVSIFLSALNSSANPIIYFFVGSFRQRQNRQNLKLVLQRALQDTPEVDEGGGWLPQETLELSGSRLEQ</sequence>
<evidence type="ECO:0000250" key="1"/>
<evidence type="ECO:0000255" key="2"/>
<evidence type="ECO:0000255" key="3">
    <source>
        <dbReference type="PROSITE-ProRule" id="PRU00521"/>
    </source>
</evidence>
<evidence type="ECO:0000269" key="4">
    <source>
    </source>
</evidence>
<evidence type="ECO:0000269" key="5">
    <source>
    </source>
</evidence>
<evidence type="ECO:0000269" key="6">
    <source>
    </source>
</evidence>
<evidence type="ECO:0000269" key="7">
    <source ref="3"/>
</evidence>
<evidence type="ECO:0000269" key="8">
    <source ref="5"/>
</evidence>
<evidence type="ECO:0000305" key="9"/>